<proteinExistence type="inferred from homology"/>
<accession>Q92C06</accession>
<protein>
    <recommendedName>
        <fullName evidence="1">Aminomethyltransferase</fullName>
        <ecNumber evidence="1">2.1.2.10</ecNumber>
    </recommendedName>
    <alternativeName>
        <fullName evidence="1">Glycine cleavage system T protein</fullName>
    </alternativeName>
</protein>
<sequence length="362" mass="39586">MTELLKTPIHPLYAKYGAKTIDFGGWDLPVQFAGIKAEHEAVRTDAGLFDVSHMGEILVEGPDSTSYLQYLLSNDIEKIKIGKAQYNIMCYETGGTVDDLVVYKKSETEYILVVNAANTEKDYEWMVQNIVGDVTVKNASSEFGQLALQGPNAEKILSKLTDADLSSISFFGFIEDADVAGVKTIISRSGYTGEDGFEIYMQSADAGKVFEAILAEGVAPIGLGARDTLRLEAVLALYGQELSKDITPLEAGLNFAVKLKKEADFIGKQALIKQKEAGLTRKLVGIELIERGIPRHDYPVFLNDKEIGVITSGTQSPTLGTNIGLALIDTAYTELDQELEVGIRNKKVKAKVVQTPFYKRAK</sequence>
<gene>
    <name evidence="1" type="primary">gcvT</name>
    <name type="ordered locus">lin1385</name>
</gene>
<comment type="function">
    <text evidence="1">The glycine cleavage system catalyzes the degradation of glycine.</text>
</comment>
<comment type="catalytic activity">
    <reaction evidence="1">
        <text>N(6)-[(R)-S(8)-aminomethyldihydrolipoyl]-L-lysyl-[protein] + (6S)-5,6,7,8-tetrahydrofolate = N(6)-[(R)-dihydrolipoyl]-L-lysyl-[protein] + (6R)-5,10-methylene-5,6,7,8-tetrahydrofolate + NH4(+)</text>
        <dbReference type="Rhea" id="RHEA:16945"/>
        <dbReference type="Rhea" id="RHEA-COMP:10475"/>
        <dbReference type="Rhea" id="RHEA-COMP:10492"/>
        <dbReference type="ChEBI" id="CHEBI:15636"/>
        <dbReference type="ChEBI" id="CHEBI:28938"/>
        <dbReference type="ChEBI" id="CHEBI:57453"/>
        <dbReference type="ChEBI" id="CHEBI:83100"/>
        <dbReference type="ChEBI" id="CHEBI:83143"/>
        <dbReference type="EC" id="2.1.2.10"/>
    </reaction>
</comment>
<comment type="subunit">
    <text evidence="1">The glycine cleavage system is composed of four proteins: P, T, L and H.</text>
</comment>
<comment type="similarity">
    <text evidence="1">Belongs to the GcvT family.</text>
</comment>
<evidence type="ECO:0000255" key="1">
    <source>
        <dbReference type="HAMAP-Rule" id="MF_00259"/>
    </source>
</evidence>
<name>GCST_LISIN</name>
<organism>
    <name type="scientific">Listeria innocua serovar 6a (strain ATCC BAA-680 / CLIP 11262)</name>
    <dbReference type="NCBI Taxonomy" id="272626"/>
    <lineage>
        <taxon>Bacteria</taxon>
        <taxon>Bacillati</taxon>
        <taxon>Bacillota</taxon>
        <taxon>Bacilli</taxon>
        <taxon>Bacillales</taxon>
        <taxon>Listeriaceae</taxon>
        <taxon>Listeria</taxon>
    </lineage>
</organism>
<reference key="1">
    <citation type="journal article" date="2001" name="Science">
        <title>Comparative genomics of Listeria species.</title>
        <authorList>
            <person name="Glaser P."/>
            <person name="Frangeul L."/>
            <person name="Buchrieser C."/>
            <person name="Rusniok C."/>
            <person name="Amend A."/>
            <person name="Baquero F."/>
            <person name="Berche P."/>
            <person name="Bloecker H."/>
            <person name="Brandt P."/>
            <person name="Chakraborty T."/>
            <person name="Charbit A."/>
            <person name="Chetouani F."/>
            <person name="Couve E."/>
            <person name="de Daruvar A."/>
            <person name="Dehoux P."/>
            <person name="Domann E."/>
            <person name="Dominguez-Bernal G."/>
            <person name="Duchaud E."/>
            <person name="Durant L."/>
            <person name="Dussurget O."/>
            <person name="Entian K.-D."/>
            <person name="Fsihi H."/>
            <person name="Garcia-del Portillo F."/>
            <person name="Garrido P."/>
            <person name="Gautier L."/>
            <person name="Goebel W."/>
            <person name="Gomez-Lopez N."/>
            <person name="Hain T."/>
            <person name="Hauf J."/>
            <person name="Jackson D."/>
            <person name="Jones L.-M."/>
            <person name="Kaerst U."/>
            <person name="Kreft J."/>
            <person name="Kuhn M."/>
            <person name="Kunst F."/>
            <person name="Kurapkat G."/>
            <person name="Madueno E."/>
            <person name="Maitournam A."/>
            <person name="Mata Vicente J."/>
            <person name="Ng E."/>
            <person name="Nedjari H."/>
            <person name="Nordsiek G."/>
            <person name="Novella S."/>
            <person name="de Pablos B."/>
            <person name="Perez-Diaz J.-C."/>
            <person name="Purcell R."/>
            <person name="Remmel B."/>
            <person name="Rose M."/>
            <person name="Schlueter T."/>
            <person name="Simoes N."/>
            <person name="Tierrez A."/>
            <person name="Vazquez-Boland J.-A."/>
            <person name="Voss H."/>
            <person name="Wehland J."/>
            <person name="Cossart P."/>
        </authorList>
    </citation>
    <scope>NUCLEOTIDE SEQUENCE [LARGE SCALE GENOMIC DNA]</scope>
    <source>
        <strain>ATCC BAA-680 / CLIP 11262</strain>
    </source>
</reference>
<feature type="chain" id="PRO_0000122567" description="Aminomethyltransferase">
    <location>
        <begin position="1"/>
        <end position="362"/>
    </location>
</feature>
<keyword id="KW-0032">Aminotransferase</keyword>
<keyword id="KW-0808">Transferase</keyword>
<dbReference type="EC" id="2.1.2.10" evidence="1"/>
<dbReference type="EMBL" id="AL596168">
    <property type="protein sequence ID" value="CAC96616.1"/>
    <property type="molecule type" value="Genomic_DNA"/>
</dbReference>
<dbReference type="PIR" id="AH1605">
    <property type="entry name" value="AH1605"/>
</dbReference>
<dbReference type="RefSeq" id="WP_010991510.1">
    <property type="nucleotide sequence ID" value="NC_003212.1"/>
</dbReference>
<dbReference type="SMR" id="Q92C06"/>
<dbReference type="STRING" id="272626.gene:17565716"/>
<dbReference type="GeneID" id="93234765"/>
<dbReference type="KEGG" id="lin:lin1385"/>
<dbReference type="eggNOG" id="COG0404">
    <property type="taxonomic scope" value="Bacteria"/>
</dbReference>
<dbReference type="HOGENOM" id="CLU_007884_10_2_9"/>
<dbReference type="OrthoDB" id="9774591at2"/>
<dbReference type="Proteomes" id="UP000002513">
    <property type="component" value="Chromosome"/>
</dbReference>
<dbReference type="GO" id="GO:0005829">
    <property type="term" value="C:cytosol"/>
    <property type="evidence" value="ECO:0007669"/>
    <property type="project" value="TreeGrafter"/>
</dbReference>
<dbReference type="GO" id="GO:0005960">
    <property type="term" value="C:glycine cleavage complex"/>
    <property type="evidence" value="ECO:0007669"/>
    <property type="project" value="InterPro"/>
</dbReference>
<dbReference type="GO" id="GO:0004047">
    <property type="term" value="F:aminomethyltransferase activity"/>
    <property type="evidence" value="ECO:0007669"/>
    <property type="project" value="UniProtKB-UniRule"/>
</dbReference>
<dbReference type="GO" id="GO:0008483">
    <property type="term" value="F:transaminase activity"/>
    <property type="evidence" value="ECO:0007669"/>
    <property type="project" value="UniProtKB-KW"/>
</dbReference>
<dbReference type="GO" id="GO:0019464">
    <property type="term" value="P:glycine decarboxylation via glycine cleavage system"/>
    <property type="evidence" value="ECO:0007669"/>
    <property type="project" value="UniProtKB-UniRule"/>
</dbReference>
<dbReference type="FunFam" id="2.40.30.110:FF:000003">
    <property type="entry name" value="Aminomethyltransferase"/>
    <property type="match status" value="1"/>
</dbReference>
<dbReference type="FunFam" id="3.30.70.1400:FF:000001">
    <property type="entry name" value="Aminomethyltransferase"/>
    <property type="match status" value="1"/>
</dbReference>
<dbReference type="FunFam" id="4.10.1250.10:FF:000001">
    <property type="entry name" value="Aminomethyltransferase"/>
    <property type="match status" value="1"/>
</dbReference>
<dbReference type="Gene3D" id="2.40.30.110">
    <property type="entry name" value="Aminomethyltransferase beta-barrel domains"/>
    <property type="match status" value="1"/>
</dbReference>
<dbReference type="Gene3D" id="3.30.70.1400">
    <property type="entry name" value="Aminomethyltransferase beta-barrel domains"/>
    <property type="match status" value="1"/>
</dbReference>
<dbReference type="Gene3D" id="4.10.1250.10">
    <property type="entry name" value="Aminomethyltransferase fragment"/>
    <property type="match status" value="1"/>
</dbReference>
<dbReference type="Gene3D" id="3.30.1360.120">
    <property type="entry name" value="Probable tRNA modification gtpase trme, domain 1"/>
    <property type="match status" value="1"/>
</dbReference>
<dbReference type="HAMAP" id="MF_00259">
    <property type="entry name" value="GcvT"/>
    <property type="match status" value="1"/>
</dbReference>
<dbReference type="InterPro" id="IPR006223">
    <property type="entry name" value="GCS_T"/>
</dbReference>
<dbReference type="InterPro" id="IPR022903">
    <property type="entry name" value="GCS_T_bac"/>
</dbReference>
<dbReference type="InterPro" id="IPR013977">
    <property type="entry name" value="GCST_C"/>
</dbReference>
<dbReference type="InterPro" id="IPR006222">
    <property type="entry name" value="GCV_T_N"/>
</dbReference>
<dbReference type="InterPro" id="IPR028896">
    <property type="entry name" value="GcvT/YgfZ/DmdA"/>
</dbReference>
<dbReference type="InterPro" id="IPR029043">
    <property type="entry name" value="GcvT/YgfZ_C"/>
</dbReference>
<dbReference type="InterPro" id="IPR027266">
    <property type="entry name" value="TrmE/GcvT_dom1"/>
</dbReference>
<dbReference type="NCBIfam" id="TIGR00528">
    <property type="entry name" value="gcvT"/>
    <property type="match status" value="1"/>
</dbReference>
<dbReference type="NCBIfam" id="NF001567">
    <property type="entry name" value="PRK00389.1"/>
    <property type="match status" value="1"/>
</dbReference>
<dbReference type="PANTHER" id="PTHR43757">
    <property type="entry name" value="AMINOMETHYLTRANSFERASE"/>
    <property type="match status" value="1"/>
</dbReference>
<dbReference type="PANTHER" id="PTHR43757:SF2">
    <property type="entry name" value="AMINOMETHYLTRANSFERASE, MITOCHONDRIAL"/>
    <property type="match status" value="1"/>
</dbReference>
<dbReference type="Pfam" id="PF01571">
    <property type="entry name" value="GCV_T"/>
    <property type="match status" value="1"/>
</dbReference>
<dbReference type="Pfam" id="PF08669">
    <property type="entry name" value="GCV_T_C"/>
    <property type="match status" value="1"/>
</dbReference>
<dbReference type="PIRSF" id="PIRSF006487">
    <property type="entry name" value="GcvT"/>
    <property type="match status" value="1"/>
</dbReference>
<dbReference type="SUPFAM" id="SSF101790">
    <property type="entry name" value="Aminomethyltransferase beta-barrel domain"/>
    <property type="match status" value="1"/>
</dbReference>
<dbReference type="SUPFAM" id="SSF103025">
    <property type="entry name" value="Folate-binding domain"/>
    <property type="match status" value="1"/>
</dbReference>